<evidence type="ECO:0000255" key="1">
    <source>
        <dbReference type="HAMAP-Rule" id="MF_00001"/>
    </source>
</evidence>
<evidence type="ECO:0000305" key="2"/>
<accession>Q8G655</accession>
<organism>
    <name type="scientific">Bifidobacterium longum (strain NCC 2705)</name>
    <dbReference type="NCBI Taxonomy" id="206672"/>
    <lineage>
        <taxon>Bacteria</taxon>
        <taxon>Bacillati</taxon>
        <taxon>Actinomycetota</taxon>
        <taxon>Actinomycetes</taxon>
        <taxon>Bifidobacteriales</taxon>
        <taxon>Bifidobacteriaceae</taxon>
        <taxon>Bifidobacterium</taxon>
    </lineage>
</organism>
<protein>
    <recommendedName>
        <fullName evidence="1">Aspartate carbamoyltransferase catalytic subunit</fullName>
        <ecNumber evidence="1">2.1.3.2</ecNumber>
    </recommendedName>
    <alternativeName>
        <fullName evidence="1">Aspartate transcarbamylase</fullName>
        <shortName evidence="1">ATCase</shortName>
    </alternativeName>
</protein>
<gene>
    <name evidence="1" type="primary">pyrB</name>
    <name type="ordered locus">BL0794</name>
</gene>
<dbReference type="EC" id="2.1.3.2" evidence="1"/>
<dbReference type="EMBL" id="AE014295">
    <property type="protein sequence ID" value="AAN24609.1"/>
    <property type="status" value="ALT_INIT"/>
    <property type="molecule type" value="Genomic_DNA"/>
</dbReference>
<dbReference type="RefSeq" id="NP_695973.1">
    <property type="nucleotide sequence ID" value="NC_004307.2"/>
</dbReference>
<dbReference type="RefSeq" id="WP_007054218.1">
    <property type="nucleotide sequence ID" value="NC_004307.2"/>
</dbReference>
<dbReference type="SMR" id="Q8G655"/>
<dbReference type="STRING" id="206672.BL0794"/>
<dbReference type="EnsemblBacteria" id="AAN24609">
    <property type="protein sequence ID" value="AAN24609"/>
    <property type="gene ID" value="BL0794"/>
</dbReference>
<dbReference type="GeneID" id="69578053"/>
<dbReference type="KEGG" id="blo:BL0794"/>
<dbReference type="PATRIC" id="fig|206672.9.peg.495"/>
<dbReference type="HOGENOM" id="CLU_043846_1_2_11"/>
<dbReference type="OrthoDB" id="9774690at2"/>
<dbReference type="UniPathway" id="UPA00070">
    <property type="reaction ID" value="UER00116"/>
</dbReference>
<dbReference type="Proteomes" id="UP000000439">
    <property type="component" value="Chromosome"/>
</dbReference>
<dbReference type="GO" id="GO:0016597">
    <property type="term" value="F:amino acid binding"/>
    <property type="evidence" value="ECO:0007669"/>
    <property type="project" value="InterPro"/>
</dbReference>
<dbReference type="GO" id="GO:0004070">
    <property type="term" value="F:aspartate carbamoyltransferase activity"/>
    <property type="evidence" value="ECO:0007669"/>
    <property type="project" value="UniProtKB-UniRule"/>
</dbReference>
<dbReference type="GO" id="GO:0006207">
    <property type="term" value="P:'de novo' pyrimidine nucleobase biosynthetic process"/>
    <property type="evidence" value="ECO:0007669"/>
    <property type="project" value="InterPro"/>
</dbReference>
<dbReference type="GO" id="GO:0044205">
    <property type="term" value="P:'de novo' UMP biosynthetic process"/>
    <property type="evidence" value="ECO:0007669"/>
    <property type="project" value="UniProtKB-UniRule"/>
</dbReference>
<dbReference type="GO" id="GO:0006520">
    <property type="term" value="P:amino acid metabolic process"/>
    <property type="evidence" value="ECO:0007669"/>
    <property type="project" value="InterPro"/>
</dbReference>
<dbReference type="FunFam" id="3.40.50.1370:FF:000002">
    <property type="entry name" value="Aspartate carbamoyltransferase 2"/>
    <property type="match status" value="1"/>
</dbReference>
<dbReference type="Gene3D" id="3.40.50.1370">
    <property type="entry name" value="Aspartate/ornithine carbamoyltransferase"/>
    <property type="match status" value="2"/>
</dbReference>
<dbReference type="HAMAP" id="MF_00001">
    <property type="entry name" value="Asp_carb_tr"/>
    <property type="match status" value="1"/>
</dbReference>
<dbReference type="InterPro" id="IPR006132">
    <property type="entry name" value="Asp/Orn_carbamoyltranf_P-bd"/>
</dbReference>
<dbReference type="InterPro" id="IPR006130">
    <property type="entry name" value="Asp/Orn_carbamoylTrfase"/>
</dbReference>
<dbReference type="InterPro" id="IPR036901">
    <property type="entry name" value="Asp/Orn_carbamoylTrfase_sf"/>
</dbReference>
<dbReference type="InterPro" id="IPR002082">
    <property type="entry name" value="Asp_carbamoyltransf"/>
</dbReference>
<dbReference type="InterPro" id="IPR006131">
    <property type="entry name" value="Asp_carbamoyltransf_Asp/Orn-bd"/>
</dbReference>
<dbReference type="NCBIfam" id="TIGR00670">
    <property type="entry name" value="asp_carb_tr"/>
    <property type="match status" value="1"/>
</dbReference>
<dbReference type="NCBIfam" id="NF002032">
    <property type="entry name" value="PRK00856.1"/>
    <property type="match status" value="1"/>
</dbReference>
<dbReference type="PANTHER" id="PTHR45753:SF6">
    <property type="entry name" value="ASPARTATE CARBAMOYLTRANSFERASE"/>
    <property type="match status" value="1"/>
</dbReference>
<dbReference type="PANTHER" id="PTHR45753">
    <property type="entry name" value="ORNITHINE CARBAMOYLTRANSFERASE, MITOCHONDRIAL"/>
    <property type="match status" value="1"/>
</dbReference>
<dbReference type="Pfam" id="PF00185">
    <property type="entry name" value="OTCace"/>
    <property type="match status" value="1"/>
</dbReference>
<dbReference type="Pfam" id="PF02729">
    <property type="entry name" value="OTCace_N"/>
    <property type="match status" value="1"/>
</dbReference>
<dbReference type="PRINTS" id="PR00100">
    <property type="entry name" value="AOTCASE"/>
</dbReference>
<dbReference type="PRINTS" id="PR00101">
    <property type="entry name" value="ATCASE"/>
</dbReference>
<dbReference type="SUPFAM" id="SSF53671">
    <property type="entry name" value="Aspartate/ornithine carbamoyltransferase"/>
    <property type="match status" value="1"/>
</dbReference>
<dbReference type="PROSITE" id="PS00097">
    <property type="entry name" value="CARBAMOYLTRANSFERASE"/>
    <property type="match status" value="1"/>
</dbReference>
<reference key="1">
    <citation type="journal article" date="2002" name="Proc. Natl. Acad. Sci. U.S.A.">
        <title>The genome sequence of Bifidobacterium longum reflects its adaptation to the human gastrointestinal tract.</title>
        <authorList>
            <person name="Schell M.A."/>
            <person name="Karmirantzou M."/>
            <person name="Snel B."/>
            <person name="Vilanova D."/>
            <person name="Berger B."/>
            <person name="Pessi G."/>
            <person name="Zwahlen M.-C."/>
            <person name="Desiere F."/>
            <person name="Bork P."/>
            <person name="Delley M."/>
            <person name="Pridmore R.D."/>
            <person name="Arigoni F."/>
        </authorList>
    </citation>
    <scope>NUCLEOTIDE SEQUENCE [LARGE SCALE GENOMIC DNA]</scope>
    <source>
        <strain>NCC 2705</strain>
    </source>
</reference>
<name>PYRB_BIFLO</name>
<feature type="chain" id="PRO_0000113103" description="Aspartate carbamoyltransferase catalytic subunit">
    <location>
        <begin position="1"/>
        <end position="320"/>
    </location>
</feature>
<feature type="binding site" evidence="1">
    <location>
        <position position="53"/>
    </location>
    <ligand>
        <name>carbamoyl phosphate</name>
        <dbReference type="ChEBI" id="CHEBI:58228"/>
    </ligand>
</feature>
<feature type="binding site" evidence="1">
    <location>
        <position position="54"/>
    </location>
    <ligand>
        <name>carbamoyl phosphate</name>
        <dbReference type="ChEBI" id="CHEBI:58228"/>
    </ligand>
</feature>
<feature type="binding site" evidence="1">
    <location>
        <position position="82"/>
    </location>
    <ligand>
        <name>L-aspartate</name>
        <dbReference type="ChEBI" id="CHEBI:29991"/>
    </ligand>
</feature>
<feature type="binding site" evidence="1">
    <location>
        <position position="103"/>
    </location>
    <ligand>
        <name>carbamoyl phosphate</name>
        <dbReference type="ChEBI" id="CHEBI:58228"/>
    </ligand>
</feature>
<feature type="binding site" evidence="1">
    <location>
        <position position="131"/>
    </location>
    <ligand>
        <name>carbamoyl phosphate</name>
        <dbReference type="ChEBI" id="CHEBI:58228"/>
    </ligand>
</feature>
<feature type="binding site" evidence="1">
    <location>
        <position position="134"/>
    </location>
    <ligand>
        <name>carbamoyl phosphate</name>
        <dbReference type="ChEBI" id="CHEBI:58228"/>
    </ligand>
</feature>
<feature type="binding site" evidence="1">
    <location>
        <position position="164"/>
    </location>
    <ligand>
        <name>L-aspartate</name>
        <dbReference type="ChEBI" id="CHEBI:29991"/>
    </ligand>
</feature>
<feature type="binding site" evidence="1">
    <location>
        <position position="227"/>
    </location>
    <ligand>
        <name>L-aspartate</name>
        <dbReference type="ChEBI" id="CHEBI:29991"/>
    </ligand>
</feature>
<feature type="binding site" evidence="1">
    <location>
        <position position="266"/>
    </location>
    <ligand>
        <name>carbamoyl phosphate</name>
        <dbReference type="ChEBI" id="CHEBI:58228"/>
    </ligand>
</feature>
<feature type="binding site" evidence="1">
    <location>
        <position position="267"/>
    </location>
    <ligand>
        <name>carbamoyl phosphate</name>
        <dbReference type="ChEBI" id="CHEBI:58228"/>
    </ligand>
</feature>
<proteinExistence type="inferred from homology"/>
<comment type="function">
    <text evidence="1">Catalyzes the condensation of carbamoyl phosphate and aspartate to form carbamoyl aspartate and inorganic phosphate, the committed step in the de novo pyrimidine nucleotide biosynthesis pathway.</text>
</comment>
<comment type="catalytic activity">
    <reaction evidence="1">
        <text>carbamoyl phosphate + L-aspartate = N-carbamoyl-L-aspartate + phosphate + H(+)</text>
        <dbReference type="Rhea" id="RHEA:20013"/>
        <dbReference type="ChEBI" id="CHEBI:15378"/>
        <dbReference type="ChEBI" id="CHEBI:29991"/>
        <dbReference type="ChEBI" id="CHEBI:32814"/>
        <dbReference type="ChEBI" id="CHEBI:43474"/>
        <dbReference type="ChEBI" id="CHEBI:58228"/>
        <dbReference type="EC" id="2.1.3.2"/>
    </reaction>
</comment>
<comment type="pathway">
    <text evidence="1">Pyrimidine metabolism; UMP biosynthesis via de novo pathway; (S)-dihydroorotate from bicarbonate: step 2/3.</text>
</comment>
<comment type="subunit">
    <text evidence="1">Heterododecamer (2C3:3R2) of six catalytic PyrB chains organized as two trimers (C3), and six regulatory PyrI chains organized as three dimers (R2).</text>
</comment>
<comment type="similarity">
    <text evidence="1">Belongs to the aspartate/ornithine carbamoyltransferase superfamily. ATCase family.</text>
</comment>
<comment type="sequence caution" evidence="2">
    <conflict type="erroneous initiation">
        <sequence resource="EMBL-CDS" id="AAN24609"/>
    </conflict>
</comment>
<sequence>MVGKSVVTLDGLSTNQILDLLHKAEYIDSHRKEIAHTCDGRVLATLFYEPSTRTRLSFETAMLRLGGKVIGFAGAQLASVTKGESIADTLKTVSNYVDVVAIRHPKEGAALVASRAASVPVINAGDGGHMHPTQTLADLATLQSRFGRITDLTVGLCGDLTFGRTVHSLIETLCRFGNVRFVLISPDELKTPQYVIDRINATDSCSYVEVRDLASVIGDLDVLYMTRVQKERFFNEDDYLRLRDTYILDEEKLQLAKPSMAVLHPLPRVNEIAVDVDDDPRAAYFEQVKNGMLVRMALESTVVGDELPGYEPLNPKEVQA</sequence>
<keyword id="KW-0665">Pyrimidine biosynthesis</keyword>
<keyword id="KW-1185">Reference proteome</keyword>
<keyword id="KW-0808">Transferase</keyword>